<organism>
    <name type="scientific">Mycobacterium tuberculosis (strain KZN 1435 / MDR)</name>
    <dbReference type="NCBI Taxonomy" id="478434"/>
    <lineage>
        <taxon>Bacteria</taxon>
        <taxon>Bacillati</taxon>
        <taxon>Actinomycetota</taxon>
        <taxon>Actinomycetes</taxon>
        <taxon>Mycobacteriales</taxon>
        <taxon>Mycobacteriaceae</taxon>
        <taxon>Mycobacterium</taxon>
        <taxon>Mycobacterium tuberculosis complex</taxon>
    </lineage>
</organism>
<dbReference type="EMBL" id="CP001658">
    <property type="protein sequence ID" value="ACT24935.1"/>
    <property type="molecule type" value="Genomic_DNA"/>
</dbReference>
<dbReference type="RefSeq" id="WP_003906749.1">
    <property type="nucleotide sequence ID" value="NZ_KK341220.1"/>
</dbReference>
<dbReference type="SMR" id="C6DPV2"/>
<dbReference type="KEGG" id="mtb:TBMG_01871"/>
<dbReference type="PATRIC" id="fig|478434.13.peg.2248"/>
<dbReference type="HOGENOM" id="CLU_071031_0_0_11"/>
<dbReference type="UniPathway" id="UPA00997"/>
<dbReference type="GO" id="GO:0005737">
    <property type="term" value="C:cytoplasm"/>
    <property type="evidence" value="ECO:0007669"/>
    <property type="project" value="UniProtKB-SubCell"/>
</dbReference>
<dbReference type="GO" id="GO:0019773">
    <property type="term" value="C:proteasome core complex, alpha-subunit complex"/>
    <property type="evidence" value="ECO:0007669"/>
    <property type="project" value="UniProtKB-UniRule"/>
</dbReference>
<dbReference type="GO" id="GO:0004298">
    <property type="term" value="F:threonine-type endopeptidase activity"/>
    <property type="evidence" value="ECO:0007669"/>
    <property type="project" value="InterPro"/>
</dbReference>
<dbReference type="GO" id="GO:0019941">
    <property type="term" value="P:modification-dependent protein catabolic process"/>
    <property type="evidence" value="ECO:0007669"/>
    <property type="project" value="UniProtKB-UniRule"/>
</dbReference>
<dbReference type="GO" id="GO:0010498">
    <property type="term" value="P:proteasomal protein catabolic process"/>
    <property type="evidence" value="ECO:0007669"/>
    <property type="project" value="UniProtKB-UniRule"/>
</dbReference>
<dbReference type="CDD" id="cd01906">
    <property type="entry name" value="proteasome_protease_HslV"/>
    <property type="match status" value="1"/>
</dbReference>
<dbReference type="FunFam" id="3.60.20.10:FF:000023">
    <property type="entry name" value="Proteasome subunit alpha"/>
    <property type="match status" value="1"/>
</dbReference>
<dbReference type="Gene3D" id="3.60.20.10">
    <property type="entry name" value="Glutamine Phosphoribosylpyrophosphate, subunit 1, domain 1"/>
    <property type="match status" value="1"/>
</dbReference>
<dbReference type="HAMAP" id="MF_00289_B">
    <property type="entry name" value="Proteasome_A_B"/>
    <property type="match status" value="1"/>
</dbReference>
<dbReference type="InterPro" id="IPR029055">
    <property type="entry name" value="Ntn_hydrolases_N"/>
</dbReference>
<dbReference type="InterPro" id="IPR050115">
    <property type="entry name" value="Proteasome_alpha"/>
</dbReference>
<dbReference type="InterPro" id="IPR023332">
    <property type="entry name" value="Proteasome_alpha-type"/>
</dbReference>
<dbReference type="InterPro" id="IPR022296">
    <property type="entry name" value="Proteasome_asu_bac"/>
</dbReference>
<dbReference type="InterPro" id="IPR001353">
    <property type="entry name" value="Proteasome_sua/b"/>
</dbReference>
<dbReference type="NCBIfam" id="TIGR03691">
    <property type="entry name" value="20S_bact_alpha"/>
    <property type="match status" value="1"/>
</dbReference>
<dbReference type="PANTHER" id="PTHR11599">
    <property type="entry name" value="PROTEASOME SUBUNIT ALPHA/BETA"/>
    <property type="match status" value="1"/>
</dbReference>
<dbReference type="Pfam" id="PF00227">
    <property type="entry name" value="Proteasome"/>
    <property type="match status" value="1"/>
</dbReference>
<dbReference type="SUPFAM" id="SSF56235">
    <property type="entry name" value="N-terminal nucleophile aminohydrolases (Ntn hydrolases)"/>
    <property type="match status" value="1"/>
</dbReference>
<dbReference type="PROSITE" id="PS51475">
    <property type="entry name" value="PROTEASOME_ALPHA_2"/>
    <property type="match status" value="1"/>
</dbReference>
<keyword id="KW-0963">Cytoplasm</keyword>
<keyword id="KW-0647">Proteasome</keyword>
<gene>
    <name evidence="1" type="primary">prcA</name>
    <name type="ordered locus">TBMG_01871</name>
</gene>
<name>PSA_MYCTK</name>
<evidence type="ECO:0000255" key="1">
    <source>
        <dbReference type="HAMAP-Rule" id="MF_00289"/>
    </source>
</evidence>
<reference key="1">
    <citation type="submission" date="2009-07" db="EMBL/GenBank/DDBJ databases">
        <title>The genome sequence of Mycobacterium tuberculosis strain KZN 1435.</title>
        <authorList>
            <person name="Murray M."/>
            <person name="Pillay M."/>
            <person name="Borowsky M.L."/>
            <person name="Young S.K."/>
            <person name="Zeng Q."/>
            <person name="Koehrsen M."/>
            <person name="Alvarado L."/>
            <person name="Berlin A.M."/>
            <person name="Borenstein D."/>
            <person name="Chen Z."/>
            <person name="Engels R."/>
            <person name="Freedman E."/>
            <person name="Gellesch M."/>
            <person name="Goldberg J."/>
            <person name="Griggs A."/>
            <person name="Gujja S."/>
            <person name="Heiman D.I."/>
            <person name="Hepburn T.A."/>
            <person name="Howarth C."/>
            <person name="Jen D."/>
            <person name="Larson L."/>
            <person name="Lewis B."/>
            <person name="Mehta T."/>
            <person name="Park D."/>
            <person name="Pearson M."/>
            <person name="Roberts A."/>
            <person name="Saif S."/>
            <person name="Shea T.D."/>
            <person name="Shenoy N."/>
            <person name="Sisk P."/>
            <person name="Stolte C."/>
            <person name="Sykes S.N."/>
            <person name="Walk T."/>
            <person name="White J."/>
            <person name="Yandava C."/>
            <person name="Haas B."/>
            <person name="Nusbaum C."/>
            <person name="Galagan J."/>
            <person name="Birren B."/>
        </authorList>
    </citation>
    <scope>NUCLEOTIDE SEQUENCE [LARGE SCALE GENOMIC DNA]</scope>
    <source>
        <strain>KZN 1435 / MDR</strain>
    </source>
</reference>
<protein>
    <recommendedName>
        <fullName evidence="1">Proteasome subunit alpha</fullName>
    </recommendedName>
    <alternativeName>
        <fullName evidence="1">20S proteasome alpha subunit</fullName>
    </alternativeName>
    <alternativeName>
        <fullName evidence="1">Proteasome core protein PrcA</fullName>
    </alternativeName>
</protein>
<accession>C6DPV2</accession>
<sequence>MSFPYFISPEQAMRERSELARKGIARAKSVVALAYAGGVLFVAENPSRSLQKISELYDRVGFAAAGKFNEFDNLRRGGIQFADTRGYAYDRRDVTGRQLANVYAQTLGTIFTEQAKPYEVELCVAEVAHYGETKRPELYRITYDGSIADEPHFVVMGGTTEPIANALKESYAENASLTDALRIAVAALRAGSADTSGGDQPTLGVASLEVAVLDANRPRRAFRRITGSALQALLVDQESPQSDGESSG</sequence>
<feature type="chain" id="PRO_0000397160" description="Proteasome subunit alpha">
    <location>
        <begin position="1"/>
        <end position="248"/>
    </location>
</feature>
<comment type="function">
    <text evidence="1">Component of the proteasome core, a large protease complex with broad specificity involved in protein degradation.</text>
</comment>
<comment type="activity regulation">
    <text evidence="1">The formation of the proteasomal ATPase ARC-20S proteasome complex, likely via the docking of the C-termini of ARC into the intersubunit pockets in the alpha-rings, may trigger opening of the gate for substrate entry. Interconversion between the open-gate and close-gate conformations leads to a dynamic regulation of the 20S proteasome proteolysis activity.</text>
</comment>
<comment type="pathway">
    <text evidence="1">Protein degradation; proteasomal Pup-dependent pathway.</text>
</comment>
<comment type="subunit">
    <text evidence="1">The 20S proteasome core is composed of 14 alpha and 14 beta subunits that assemble into four stacked heptameric rings, resulting in a barrel-shaped structure. The two inner rings, each composed of seven catalytic beta subunits, are sandwiched by two outer rings, each composed of seven alpha subunits. The catalytic chamber with the active sites is on the inside of the barrel. Has a gated structure, the ends of the cylinder being occluded by the N-termini of the alpha-subunits. Is capped by the proteasome-associated ATPase, ARC.</text>
</comment>
<comment type="subcellular location">
    <subcellularLocation>
        <location evidence="1">Cytoplasm</location>
    </subcellularLocation>
</comment>
<comment type="similarity">
    <text evidence="1">Belongs to the peptidase T1A family.</text>
</comment>
<proteinExistence type="inferred from homology"/>